<sequence length="471" mass="54561">MAAMETETAPLTLESLPTDPLLLILSFLDYRDLINCCYVSRRLSQLSSHDPLWRRHCKKYWLISEEEKTQKNQCWKSLFIDTYSDVGRYIDHYAAIKKAWDDLKKYLEPRCPRMVLSLKEGAREEDLDAVEAQIGCKLPDDYRCSYRIHNGQKLVVPGLLGSMALSNHYRSEDLLDVDTAAGGFQQRQGLKYCLPLTFCIHTGLSQYIAVEAAEGRNKNEVFYQCPDQMARNPAAIDMFIIGATFTDWFTSYVKNVVSGGFPIIRDQIFRYVHDPECVATTGDITVSVSTSFLPELSSVHPPHYFFTYRIRIEMSKDALPEKACQLDSRYWRITNAKGDVEEVQGPGVVGEFPIISPGRVYEYTSCTTFSTTSGYMEGYYTFHFLYFKDKIFNVAIPRFHMACPTFRVSIARLEMGPDEYEEMEEEEEEEEEEDEDDDSADMDESDEDDEEERRRRVFDVPIRRRRCSRLF</sequence>
<accession>Q9UK99</accession>
<accession>B3KY16</accession>
<accession>D3DR05</accession>
<accession>Q86X90</accession>
<accession>Q9H0V2</accession>
<accession>Q9NUX2</accession>
<feature type="chain" id="PRO_0000119877" description="F-box only protein 3">
    <location>
        <begin position="1"/>
        <end position="471"/>
    </location>
</feature>
<feature type="domain" description="F-box" evidence="2">
    <location>
        <begin position="10"/>
        <end position="56"/>
    </location>
</feature>
<feature type="domain" description="ApaG" evidence="3">
    <location>
        <begin position="278"/>
        <end position="408"/>
    </location>
</feature>
<feature type="region of interest" description="Disordered" evidence="4">
    <location>
        <begin position="419"/>
        <end position="455"/>
    </location>
</feature>
<feature type="compositionally biased region" description="Acidic residues" evidence="4">
    <location>
        <begin position="419"/>
        <end position="451"/>
    </location>
</feature>
<feature type="splice variant" id="VSP_039614" description="In isoform 3." evidence="11">
    <location>
        <begin position="36"/>
        <end position="40"/>
    </location>
</feature>
<feature type="splice variant" id="VSP_024395" description="In isoform 2 and isoform 3." evidence="10 11">
    <original>EM</original>
    <variation>VS</variation>
    <location>
        <begin position="414"/>
        <end position="415"/>
    </location>
</feature>
<feature type="splice variant" id="VSP_024396" description="In isoform 2 and isoform 3." evidence="10 11">
    <location>
        <begin position="416"/>
        <end position="471"/>
    </location>
</feature>
<feature type="sequence variant" id="VAR_049037" description="In dbSNP:rs1402954.">
    <original>V</original>
    <variation>I</variation>
    <location>
        <position position="221"/>
    </location>
</feature>
<feature type="sequence conflict" description="In Ref. 2; CAB66560." evidence="12" ref="2">
    <original>L</original>
    <variation>M</variation>
    <location>
        <position position="28"/>
    </location>
</feature>
<feature type="sequence conflict" description="In Ref. 2; CAB66560." evidence="12" ref="2">
    <original>IKK</original>
    <variation>VKR</variation>
    <location>
        <begin position="96"/>
        <end position="98"/>
    </location>
</feature>
<feature type="sequence conflict" description="In Ref. 1; BAA91991." evidence="12" ref="1">
    <original>A</original>
    <variation>T</variation>
    <location>
        <position position="164"/>
    </location>
</feature>
<feature type="sequence conflict" description="In Ref. 2; CAB66560." evidence="12" ref="2">
    <original>D</original>
    <variation>G</variation>
    <location>
        <position position="227"/>
    </location>
</feature>
<feature type="sequence conflict" description="In Ref. 2; CAB66560." evidence="12" ref="2">
    <original>F</original>
    <variation>L</variation>
    <location>
        <position position="239"/>
    </location>
</feature>
<feature type="sequence conflict" description="In Ref. 2; CAB66560." evidence="12" ref="2">
    <original>G</original>
    <variation>E</variation>
    <location>
        <position position="378"/>
    </location>
</feature>
<feature type="strand" evidence="15">
    <location>
        <begin position="278"/>
        <end position="281"/>
    </location>
</feature>
<feature type="strand" evidence="15">
    <location>
        <begin position="284"/>
        <end position="292"/>
    </location>
</feature>
<feature type="helix" evidence="15">
    <location>
        <begin position="294"/>
        <end position="296"/>
    </location>
</feature>
<feature type="turn" evidence="15">
    <location>
        <begin position="299"/>
        <end position="302"/>
    </location>
</feature>
<feature type="strand" evidence="15">
    <location>
        <begin position="303"/>
        <end position="314"/>
    </location>
</feature>
<feature type="helix" evidence="15">
    <location>
        <begin position="320"/>
        <end position="322"/>
    </location>
</feature>
<feature type="strand" evidence="15">
    <location>
        <begin position="324"/>
        <end position="335"/>
    </location>
</feature>
<feature type="strand" evidence="15">
    <location>
        <begin position="340"/>
        <end position="348"/>
    </location>
</feature>
<feature type="strand" evidence="15">
    <location>
        <begin position="360"/>
        <end position="387"/>
    </location>
</feature>
<feature type="strand" evidence="15">
    <location>
        <begin position="391"/>
        <end position="402"/>
    </location>
</feature>
<dbReference type="EMBL" id="AK001943">
    <property type="protein sequence ID" value="BAA91991.1"/>
    <property type="molecule type" value="mRNA"/>
</dbReference>
<dbReference type="EMBL" id="AK128454">
    <property type="protein sequence ID" value="BAG54678.1"/>
    <property type="molecule type" value="mRNA"/>
</dbReference>
<dbReference type="EMBL" id="AL136625">
    <property type="protein sequence ID" value="CAB66560.1"/>
    <property type="molecule type" value="mRNA"/>
</dbReference>
<dbReference type="EMBL" id="AC113192">
    <property type="status" value="NOT_ANNOTATED_CDS"/>
    <property type="molecule type" value="Genomic_DNA"/>
</dbReference>
<dbReference type="EMBL" id="AL049629">
    <property type="status" value="NOT_ANNOTATED_CDS"/>
    <property type="molecule type" value="Genomic_DNA"/>
</dbReference>
<dbReference type="EMBL" id="CH471064">
    <property type="protein sequence ID" value="EAW68186.1"/>
    <property type="molecule type" value="Genomic_DNA"/>
</dbReference>
<dbReference type="EMBL" id="CH471064">
    <property type="protein sequence ID" value="EAW68188.1"/>
    <property type="molecule type" value="Genomic_DNA"/>
</dbReference>
<dbReference type="EMBL" id="CH471064">
    <property type="protein sequence ID" value="EAW68189.1"/>
    <property type="molecule type" value="Genomic_DNA"/>
</dbReference>
<dbReference type="EMBL" id="BC046110">
    <property type="protein sequence ID" value="AAH46110.1"/>
    <property type="molecule type" value="mRNA"/>
</dbReference>
<dbReference type="EMBL" id="AF176702">
    <property type="protein sequence ID" value="AAF03702.1"/>
    <property type="molecule type" value="mRNA"/>
</dbReference>
<dbReference type="CCDS" id="CCDS44566.1">
    <molecule id="Q9UK99-2"/>
</dbReference>
<dbReference type="CCDS" id="CCDS7887.1">
    <molecule id="Q9UK99-1"/>
</dbReference>
<dbReference type="RefSeq" id="NP_036307.2">
    <molecule id="Q9UK99-1"/>
    <property type="nucleotide sequence ID" value="NM_012175.3"/>
</dbReference>
<dbReference type="RefSeq" id="NP_208385.1">
    <molecule id="Q9UK99-2"/>
    <property type="nucleotide sequence ID" value="NM_033406.4"/>
</dbReference>
<dbReference type="PDB" id="5HDW">
    <property type="method" value="X-ray"/>
    <property type="resolution" value="2.00 A"/>
    <property type="chains" value="A=278-407"/>
</dbReference>
<dbReference type="PDB" id="9KBD">
    <property type="method" value="EM"/>
    <property type="resolution" value="3.70 A"/>
    <property type="chains" value="C=4-439"/>
</dbReference>
<dbReference type="PDB" id="9KBF">
    <property type="method" value="EM"/>
    <property type="resolution" value="3.74 A"/>
    <property type="chains" value="C=4-439"/>
</dbReference>
<dbReference type="PDBsum" id="5HDW"/>
<dbReference type="PDBsum" id="9KBD"/>
<dbReference type="PDBsum" id="9KBF"/>
<dbReference type="EMDB" id="EMD-62222"/>
<dbReference type="EMDB" id="EMD-62223"/>
<dbReference type="SMR" id="Q9UK99"/>
<dbReference type="BioGRID" id="117657">
    <property type="interactions" value="66"/>
</dbReference>
<dbReference type="ComplexPortal" id="CPX-7881">
    <property type="entry name" value="SCF E3 ubiquitin ligase complex, FBXO3 variant"/>
</dbReference>
<dbReference type="DIP" id="DIP-53688N"/>
<dbReference type="FunCoup" id="Q9UK99">
    <property type="interactions" value="1672"/>
</dbReference>
<dbReference type="IntAct" id="Q9UK99">
    <property type="interactions" value="32"/>
</dbReference>
<dbReference type="MINT" id="Q9UK99"/>
<dbReference type="STRING" id="9606.ENSP00000265651"/>
<dbReference type="GuidetoPHARMACOLOGY" id="3233"/>
<dbReference type="GlyGen" id="Q9UK99">
    <property type="glycosylation" value="1 site, 1 O-linked glycan (1 site)"/>
</dbReference>
<dbReference type="iPTMnet" id="Q9UK99"/>
<dbReference type="PhosphoSitePlus" id="Q9UK99"/>
<dbReference type="BioMuta" id="FBXO3"/>
<dbReference type="DMDM" id="145559474"/>
<dbReference type="jPOST" id="Q9UK99"/>
<dbReference type="MassIVE" id="Q9UK99"/>
<dbReference type="PaxDb" id="9606-ENSP00000265651"/>
<dbReference type="PeptideAtlas" id="Q9UK99"/>
<dbReference type="ProteomicsDB" id="84745">
    <molecule id="Q9UK99-1"/>
</dbReference>
<dbReference type="ProteomicsDB" id="84746">
    <molecule id="Q9UK99-2"/>
</dbReference>
<dbReference type="ProteomicsDB" id="84747">
    <molecule id="Q9UK99-3"/>
</dbReference>
<dbReference type="Pumba" id="Q9UK99"/>
<dbReference type="Antibodypedia" id="25751">
    <property type="antibodies" value="133 antibodies from 24 providers"/>
</dbReference>
<dbReference type="DNASU" id="26273"/>
<dbReference type="Ensembl" id="ENST00000265651.8">
    <molecule id="Q9UK99-1"/>
    <property type="protein sequence ID" value="ENSP00000265651.3"/>
    <property type="gene ID" value="ENSG00000110429.14"/>
</dbReference>
<dbReference type="Ensembl" id="ENST00000448981.6">
    <molecule id="Q9UK99-2"/>
    <property type="protein sequence ID" value="ENSP00000408836.2"/>
    <property type="gene ID" value="ENSG00000110429.14"/>
</dbReference>
<dbReference type="Ensembl" id="ENST00000530401.5">
    <molecule id="Q9UK99-3"/>
    <property type="protein sequence ID" value="ENSP00000433781.1"/>
    <property type="gene ID" value="ENSG00000110429.14"/>
</dbReference>
<dbReference type="GeneID" id="26273"/>
<dbReference type="KEGG" id="hsa:26273"/>
<dbReference type="MANE-Select" id="ENST00000265651.8">
    <property type="protein sequence ID" value="ENSP00000265651.3"/>
    <property type="RefSeq nucleotide sequence ID" value="NM_012175.4"/>
    <property type="RefSeq protein sequence ID" value="NP_036307.2"/>
</dbReference>
<dbReference type="UCSC" id="uc001muz.4">
    <molecule id="Q9UK99-1"/>
    <property type="organism name" value="human"/>
</dbReference>
<dbReference type="AGR" id="HGNC:13582"/>
<dbReference type="CTD" id="26273"/>
<dbReference type="DisGeNET" id="26273"/>
<dbReference type="GeneCards" id="FBXO3"/>
<dbReference type="HGNC" id="HGNC:13582">
    <property type="gene designation" value="FBXO3"/>
</dbReference>
<dbReference type="HPA" id="ENSG00000110429">
    <property type="expression patterns" value="Low tissue specificity"/>
</dbReference>
<dbReference type="MIM" id="609089">
    <property type="type" value="gene"/>
</dbReference>
<dbReference type="neXtProt" id="NX_Q9UK99"/>
<dbReference type="OpenTargets" id="ENSG00000110429"/>
<dbReference type="PharmGKB" id="PA28040"/>
<dbReference type="VEuPathDB" id="HostDB:ENSG00000110429"/>
<dbReference type="eggNOG" id="KOG4408">
    <property type="taxonomic scope" value="Eukaryota"/>
</dbReference>
<dbReference type="GeneTree" id="ENSGT00940000153571"/>
<dbReference type="InParanoid" id="Q9UK99"/>
<dbReference type="OMA" id="YVHDKDC"/>
<dbReference type="OrthoDB" id="2305498at2759"/>
<dbReference type="PAN-GO" id="Q9UK99">
    <property type="GO annotations" value="1 GO annotation based on evolutionary models"/>
</dbReference>
<dbReference type="PhylomeDB" id="Q9UK99"/>
<dbReference type="TreeFam" id="TF329795"/>
<dbReference type="PathwayCommons" id="Q9UK99"/>
<dbReference type="SignaLink" id="Q9UK99"/>
<dbReference type="SIGNOR" id="Q9UK99"/>
<dbReference type="UniPathway" id="UPA00143"/>
<dbReference type="BioGRID-ORCS" id="26273">
    <property type="hits" value="21 hits in 1199 CRISPR screens"/>
</dbReference>
<dbReference type="ChiTaRS" id="FBXO3">
    <property type="organism name" value="human"/>
</dbReference>
<dbReference type="GenomeRNAi" id="26273"/>
<dbReference type="Pharos" id="Q9UK99">
    <property type="development level" value="Tbio"/>
</dbReference>
<dbReference type="PRO" id="PR:Q9UK99"/>
<dbReference type="Proteomes" id="UP000005640">
    <property type="component" value="Chromosome 11"/>
</dbReference>
<dbReference type="RNAct" id="Q9UK99">
    <property type="molecule type" value="protein"/>
</dbReference>
<dbReference type="Bgee" id="ENSG00000110429">
    <property type="expression patterns" value="Expressed in skeletal muscle tissue of rectus abdominis and 204 other cell types or tissues"/>
</dbReference>
<dbReference type="ExpressionAtlas" id="Q9UK99">
    <property type="expression patterns" value="baseline and differential"/>
</dbReference>
<dbReference type="GO" id="GO:0005737">
    <property type="term" value="C:cytoplasm"/>
    <property type="evidence" value="ECO:0000318"/>
    <property type="project" value="GO_Central"/>
</dbReference>
<dbReference type="GO" id="GO:0005829">
    <property type="term" value="C:cytosol"/>
    <property type="evidence" value="ECO:0000314"/>
    <property type="project" value="HPA"/>
</dbReference>
<dbReference type="GO" id="GO:0005654">
    <property type="term" value="C:nucleoplasm"/>
    <property type="evidence" value="ECO:0000314"/>
    <property type="project" value="HPA"/>
</dbReference>
<dbReference type="GO" id="GO:0005634">
    <property type="term" value="C:nucleus"/>
    <property type="evidence" value="ECO:0000314"/>
    <property type="project" value="UniProt"/>
</dbReference>
<dbReference type="GO" id="GO:0019005">
    <property type="term" value="C:SCF ubiquitin ligase complex"/>
    <property type="evidence" value="ECO:0000314"/>
    <property type="project" value="UniProtKB"/>
</dbReference>
<dbReference type="GO" id="GO:1990756">
    <property type="term" value="F:ubiquitin-like ligase-substrate adaptor activity"/>
    <property type="evidence" value="ECO:0000314"/>
    <property type="project" value="UniProtKB"/>
</dbReference>
<dbReference type="GO" id="GO:0004842">
    <property type="term" value="F:ubiquitin-protein transferase activity"/>
    <property type="evidence" value="ECO:0000304"/>
    <property type="project" value="ProtInc"/>
</dbReference>
<dbReference type="GO" id="GO:0016567">
    <property type="term" value="P:protein ubiquitination"/>
    <property type="evidence" value="ECO:0007669"/>
    <property type="project" value="UniProtKB-UniPathway"/>
</dbReference>
<dbReference type="GO" id="GO:0006508">
    <property type="term" value="P:proteolysis"/>
    <property type="evidence" value="ECO:0000304"/>
    <property type="project" value="ProtInc"/>
</dbReference>
<dbReference type="GO" id="GO:0032496">
    <property type="term" value="P:response to lipopolysaccharide"/>
    <property type="evidence" value="ECO:0000314"/>
    <property type="project" value="UniProtKB"/>
</dbReference>
<dbReference type="GO" id="GO:0031146">
    <property type="term" value="P:SCF-dependent proteasomal ubiquitin-dependent protein catabolic process"/>
    <property type="evidence" value="ECO:0000314"/>
    <property type="project" value="UniProtKB"/>
</dbReference>
<dbReference type="CDD" id="cd22084">
    <property type="entry name" value="F-box_FBXO3"/>
    <property type="match status" value="1"/>
</dbReference>
<dbReference type="FunFam" id="1.20.1280.50:FF:000019">
    <property type="entry name" value="F-box only protein 3"/>
    <property type="match status" value="1"/>
</dbReference>
<dbReference type="FunFam" id="2.60.40.1470:FF:000002">
    <property type="entry name" value="F-box only protein 3"/>
    <property type="match status" value="1"/>
</dbReference>
<dbReference type="Gene3D" id="1.20.1280.50">
    <property type="match status" value="1"/>
</dbReference>
<dbReference type="Gene3D" id="2.60.40.1470">
    <property type="entry name" value="ApaG domain"/>
    <property type="match status" value="1"/>
</dbReference>
<dbReference type="Gene3D" id="3.40.1580.10">
    <property type="entry name" value="SMI1/KNR4-like"/>
    <property type="match status" value="1"/>
</dbReference>
<dbReference type="InterPro" id="IPR007474">
    <property type="entry name" value="ApaG_domain"/>
</dbReference>
<dbReference type="InterPro" id="IPR036767">
    <property type="entry name" value="ApaG_sf"/>
</dbReference>
<dbReference type="InterPro" id="IPR036047">
    <property type="entry name" value="F-box-like_dom_sf"/>
</dbReference>
<dbReference type="InterPro" id="IPR001810">
    <property type="entry name" value="F-box_dom"/>
</dbReference>
<dbReference type="InterPro" id="IPR052121">
    <property type="entry name" value="F-box_SCF_Substrate_Recog"/>
</dbReference>
<dbReference type="InterPro" id="IPR018958">
    <property type="entry name" value="Knr4/Smi1-like_dom"/>
</dbReference>
<dbReference type="InterPro" id="IPR037883">
    <property type="entry name" value="Knr4/Smi1-like_sf"/>
</dbReference>
<dbReference type="NCBIfam" id="NF003967">
    <property type="entry name" value="PRK05461.1"/>
    <property type="match status" value="1"/>
</dbReference>
<dbReference type="PANTHER" id="PTHR46550">
    <property type="entry name" value="F-BOX ONLY PROTEIN 3"/>
    <property type="match status" value="1"/>
</dbReference>
<dbReference type="PANTHER" id="PTHR46550:SF6">
    <property type="entry name" value="F-BOX ONLY PROTEIN 3"/>
    <property type="match status" value="1"/>
</dbReference>
<dbReference type="Pfam" id="PF04379">
    <property type="entry name" value="DUF525"/>
    <property type="match status" value="1"/>
</dbReference>
<dbReference type="Pfam" id="PF12937">
    <property type="entry name" value="F-box-like"/>
    <property type="match status" value="1"/>
</dbReference>
<dbReference type="Pfam" id="PF09346">
    <property type="entry name" value="SMI1_KNR4"/>
    <property type="match status" value="1"/>
</dbReference>
<dbReference type="SMART" id="SM00256">
    <property type="entry name" value="FBOX"/>
    <property type="match status" value="1"/>
</dbReference>
<dbReference type="SMART" id="SM00860">
    <property type="entry name" value="SMI1_KNR4"/>
    <property type="match status" value="1"/>
</dbReference>
<dbReference type="SUPFAM" id="SSF110069">
    <property type="entry name" value="ApaG-like"/>
    <property type="match status" value="1"/>
</dbReference>
<dbReference type="SUPFAM" id="SSF81383">
    <property type="entry name" value="F-box domain"/>
    <property type="match status" value="1"/>
</dbReference>
<dbReference type="SUPFAM" id="SSF160631">
    <property type="entry name" value="SMI1/KNR4-like"/>
    <property type="match status" value="1"/>
</dbReference>
<dbReference type="PROSITE" id="PS51087">
    <property type="entry name" value="APAG"/>
    <property type="match status" value="1"/>
</dbReference>
<dbReference type="PROSITE" id="PS50181">
    <property type="entry name" value="FBOX"/>
    <property type="match status" value="1"/>
</dbReference>
<comment type="function">
    <text evidence="1 5 7 8">Substrate recognition component of the SCF (SKP1-CUL1-F-box protein)-type E3 ubiquitin ligase complex, SCF(FBXO3), which mediates the ubiquitination and subsequent proteasomal degradation of target proteins (PubMed:18809579, PubMed:26037928). Mediates the ubiquitination of HIPK2 and probably that of EP300, leading to rapid degradation by the proteasome (PubMed:18809579). In the presence of PML, HIPK2 ubiquitination still occurs, but degradation is prevented (PubMed:18809579). PML, HIPK2 and FBXO3 may act synergically to activate p53/TP53-dependent transactivation (PubMed:18809579). The SCF(FBXO3) also acts as a regulator of inflammation by mediating ubiquitination and degradation of FBXL2 in response to lipopolysaccharide (LPS) (PubMed:26037928, PubMed:27010866). The SCF(FBXO3) complex specifically recognizes FBXL2 phosphorylated at 'Thr-404' and promotes its ubiquitination (PubMed:27010866).</text>
</comment>
<comment type="function">
    <text evidence="9">(Microbial infection) Associates with the Rift valley fever virus NSs to form a remodeled E3 ligase that triggers efficient proteasomal degradation of targeted proteins. The filamentous E3 ligase targets the TFIIH complex leading to robust inhibition of antiviral immunity and enhances viral pathogenesis.</text>
</comment>
<comment type="pathway">
    <text evidence="5 7">Protein modification; protein ubiquitination.</text>
</comment>
<comment type="subunit">
    <text evidence="5">Part of a SCF (SKP1-cullin-F-box) protein ligase complex SCF(FBXO3) consisting of FBXO3, SKP1, CUL1 and RBX1 (PubMed:18809579). Interacts with PML, interaction is direct and takes place either alone or within the SCF complex (PubMed:18809579).</text>
</comment>
<comment type="subunit">
    <text evidence="6 9">(Microbial infection) Interacts (via ApaG domain) with Rift valley fever virus NSs helical filament; this interaction forms a filamentous E3 which mediates degradation of TFIIH complex through interaction with GT2H1.</text>
</comment>
<comment type="interaction">
    <interactant intactId="EBI-2509901">
        <id>Q9UK99</id>
    </interactant>
    <interactant intactId="EBI-359390">
        <id>Q13616</id>
        <label>CUL1</label>
    </interactant>
    <organismsDiffer>false</organismsDiffer>
    <experiments>9</experiments>
</comment>
<comment type="interaction">
    <interactant intactId="EBI-2509901">
        <id>Q9UK99</id>
    </interactant>
    <interactant intactId="EBI-307486">
        <id>P63208</id>
        <label>SKP1</label>
    </interactant>
    <organismsDiffer>false</organismsDiffer>
    <experiments>12</experiments>
</comment>
<comment type="interaction">
    <interactant intactId="EBI-2509901">
        <id>Q9UK99</id>
    </interactant>
    <interactant intactId="EBI-6164389">
        <id>P04608</id>
        <label>tat</label>
    </interactant>
    <organismsDiffer>true</organismsDiffer>
    <experiments>3</experiments>
</comment>
<comment type="subcellular location">
    <subcellularLocation>
        <location evidence="5">Nucleus</location>
    </subcellularLocation>
    <text evidence="5">Colocalizes with PML at the peripheries of nuclear bodies.</text>
</comment>
<comment type="alternative products">
    <event type="alternative splicing"/>
    <isoform>
        <id>Q9UK99-1</id>
        <name>1</name>
        <sequence type="displayed"/>
    </isoform>
    <isoform>
        <id>Q9UK99-2</id>
        <name>2</name>
        <sequence type="described" ref="VSP_024395 VSP_024396"/>
    </isoform>
    <isoform>
        <id>Q9UK99-3</id>
        <name>3</name>
        <sequence type="described" ref="VSP_039614 VSP_024395 VSP_024396"/>
    </isoform>
</comment>
<keyword id="KW-0002">3D-structure</keyword>
<keyword id="KW-0025">Alternative splicing</keyword>
<keyword id="KW-0945">Host-virus interaction</keyword>
<keyword id="KW-0539">Nucleus</keyword>
<keyword id="KW-1267">Proteomics identification</keyword>
<keyword id="KW-1185">Reference proteome</keyword>
<keyword id="KW-0833">Ubl conjugation pathway</keyword>
<reference key="1">
    <citation type="journal article" date="2004" name="Nat. Genet.">
        <title>Complete sequencing and characterization of 21,243 full-length human cDNAs.</title>
        <authorList>
            <person name="Ota T."/>
            <person name="Suzuki Y."/>
            <person name="Nishikawa T."/>
            <person name="Otsuki T."/>
            <person name="Sugiyama T."/>
            <person name="Irie R."/>
            <person name="Wakamatsu A."/>
            <person name="Hayashi K."/>
            <person name="Sato H."/>
            <person name="Nagai K."/>
            <person name="Kimura K."/>
            <person name="Makita H."/>
            <person name="Sekine M."/>
            <person name="Obayashi M."/>
            <person name="Nishi T."/>
            <person name="Shibahara T."/>
            <person name="Tanaka T."/>
            <person name="Ishii S."/>
            <person name="Yamamoto J."/>
            <person name="Saito K."/>
            <person name="Kawai Y."/>
            <person name="Isono Y."/>
            <person name="Nakamura Y."/>
            <person name="Nagahari K."/>
            <person name="Murakami K."/>
            <person name="Yasuda T."/>
            <person name="Iwayanagi T."/>
            <person name="Wagatsuma M."/>
            <person name="Shiratori A."/>
            <person name="Sudo H."/>
            <person name="Hosoiri T."/>
            <person name="Kaku Y."/>
            <person name="Kodaira H."/>
            <person name="Kondo H."/>
            <person name="Sugawara M."/>
            <person name="Takahashi M."/>
            <person name="Kanda K."/>
            <person name="Yokoi T."/>
            <person name="Furuya T."/>
            <person name="Kikkawa E."/>
            <person name="Omura Y."/>
            <person name="Abe K."/>
            <person name="Kamihara K."/>
            <person name="Katsuta N."/>
            <person name="Sato K."/>
            <person name="Tanikawa M."/>
            <person name="Yamazaki M."/>
            <person name="Ninomiya K."/>
            <person name="Ishibashi T."/>
            <person name="Yamashita H."/>
            <person name="Murakawa K."/>
            <person name="Fujimori K."/>
            <person name="Tanai H."/>
            <person name="Kimata M."/>
            <person name="Watanabe M."/>
            <person name="Hiraoka S."/>
            <person name="Chiba Y."/>
            <person name="Ishida S."/>
            <person name="Ono Y."/>
            <person name="Takiguchi S."/>
            <person name="Watanabe S."/>
            <person name="Yosida M."/>
            <person name="Hotuta T."/>
            <person name="Kusano J."/>
            <person name="Kanehori K."/>
            <person name="Takahashi-Fujii A."/>
            <person name="Hara H."/>
            <person name="Tanase T.-O."/>
            <person name="Nomura Y."/>
            <person name="Togiya S."/>
            <person name="Komai F."/>
            <person name="Hara R."/>
            <person name="Takeuchi K."/>
            <person name="Arita M."/>
            <person name="Imose N."/>
            <person name="Musashino K."/>
            <person name="Yuuki H."/>
            <person name="Oshima A."/>
            <person name="Sasaki N."/>
            <person name="Aotsuka S."/>
            <person name="Yoshikawa Y."/>
            <person name="Matsunawa H."/>
            <person name="Ichihara T."/>
            <person name="Shiohata N."/>
            <person name="Sano S."/>
            <person name="Moriya S."/>
            <person name="Momiyama H."/>
            <person name="Satoh N."/>
            <person name="Takami S."/>
            <person name="Terashima Y."/>
            <person name="Suzuki O."/>
            <person name="Nakagawa S."/>
            <person name="Senoh A."/>
            <person name="Mizoguchi H."/>
            <person name="Goto Y."/>
            <person name="Shimizu F."/>
            <person name="Wakebe H."/>
            <person name="Hishigaki H."/>
            <person name="Watanabe T."/>
            <person name="Sugiyama A."/>
            <person name="Takemoto M."/>
            <person name="Kawakami B."/>
            <person name="Yamazaki M."/>
            <person name="Watanabe K."/>
            <person name="Kumagai A."/>
            <person name="Itakura S."/>
            <person name="Fukuzumi Y."/>
            <person name="Fujimori Y."/>
            <person name="Komiyama M."/>
            <person name="Tashiro H."/>
            <person name="Tanigami A."/>
            <person name="Fujiwara T."/>
            <person name="Ono T."/>
            <person name="Yamada K."/>
            <person name="Fujii Y."/>
            <person name="Ozaki K."/>
            <person name="Hirao M."/>
            <person name="Ohmori Y."/>
            <person name="Kawabata A."/>
            <person name="Hikiji T."/>
            <person name="Kobatake N."/>
            <person name="Inagaki H."/>
            <person name="Ikema Y."/>
            <person name="Okamoto S."/>
            <person name="Okitani R."/>
            <person name="Kawakami T."/>
            <person name="Noguchi S."/>
            <person name="Itoh T."/>
            <person name="Shigeta K."/>
            <person name="Senba T."/>
            <person name="Matsumura K."/>
            <person name="Nakajima Y."/>
            <person name="Mizuno T."/>
            <person name="Morinaga M."/>
            <person name="Sasaki M."/>
            <person name="Togashi T."/>
            <person name="Oyama M."/>
            <person name="Hata H."/>
            <person name="Watanabe M."/>
            <person name="Komatsu T."/>
            <person name="Mizushima-Sugano J."/>
            <person name="Satoh T."/>
            <person name="Shirai Y."/>
            <person name="Takahashi Y."/>
            <person name="Nakagawa K."/>
            <person name="Okumura K."/>
            <person name="Nagase T."/>
            <person name="Nomura N."/>
            <person name="Kikuchi H."/>
            <person name="Masuho Y."/>
            <person name="Yamashita R."/>
            <person name="Nakai K."/>
            <person name="Yada T."/>
            <person name="Nakamura Y."/>
            <person name="Ohara O."/>
            <person name="Isogai T."/>
            <person name="Sugano S."/>
        </authorList>
    </citation>
    <scope>NUCLEOTIDE SEQUENCE [LARGE SCALE MRNA] (ISOFORMS 1 AND 3)</scope>
    <source>
        <tissue>Placenta</tissue>
        <tissue>Thymus</tissue>
    </source>
</reference>
<reference key="2">
    <citation type="journal article" date="2001" name="Genome Res.">
        <title>Towards a catalog of human genes and proteins: sequencing and analysis of 500 novel complete protein coding human cDNAs.</title>
        <authorList>
            <person name="Wiemann S."/>
            <person name="Weil B."/>
            <person name="Wellenreuther R."/>
            <person name="Gassenhuber J."/>
            <person name="Glassl S."/>
            <person name="Ansorge W."/>
            <person name="Boecher M."/>
            <person name="Bloecker H."/>
            <person name="Bauersachs S."/>
            <person name="Blum H."/>
            <person name="Lauber J."/>
            <person name="Duesterhoeft A."/>
            <person name="Beyer A."/>
            <person name="Koehrer K."/>
            <person name="Strack N."/>
            <person name="Mewes H.-W."/>
            <person name="Ottenwaelder B."/>
            <person name="Obermaier B."/>
            <person name="Tampe J."/>
            <person name="Heubner D."/>
            <person name="Wambutt R."/>
            <person name="Korn B."/>
            <person name="Klein M."/>
            <person name="Poustka A."/>
        </authorList>
    </citation>
    <scope>NUCLEOTIDE SEQUENCE [LARGE SCALE MRNA] (ISOFORM 1)</scope>
    <source>
        <tissue>Fetal brain</tissue>
    </source>
</reference>
<reference key="3">
    <citation type="journal article" date="2006" name="Nature">
        <title>Human chromosome 11 DNA sequence and analysis including novel gene identification.</title>
        <authorList>
            <person name="Taylor T.D."/>
            <person name="Noguchi H."/>
            <person name="Totoki Y."/>
            <person name="Toyoda A."/>
            <person name="Kuroki Y."/>
            <person name="Dewar K."/>
            <person name="Lloyd C."/>
            <person name="Itoh T."/>
            <person name="Takeda T."/>
            <person name="Kim D.-W."/>
            <person name="She X."/>
            <person name="Barlow K.F."/>
            <person name="Bloom T."/>
            <person name="Bruford E."/>
            <person name="Chang J.L."/>
            <person name="Cuomo C.A."/>
            <person name="Eichler E."/>
            <person name="FitzGerald M.G."/>
            <person name="Jaffe D.B."/>
            <person name="LaButti K."/>
            <person name="Nicol R."/>
            <person name="Park H.-S."/>
            <person name="Seaman C."/>
            <person name="Sougnez C."/>
            <person name="Yang X."/>
            <person name="Zimmer A.R."/>
            <person name="Zody M.C."/>
            <person name="Birren B.W."/>
            <person name="Nusbaum C."/>
            <person name="Fujiyama A."/>
            <person name="Hattori M."/>
            <person name="Rogers J."/>
            <person name="Lander E.S."/>
            <person name="Sakaki Y."/>
        </authorList>
    </citation>
    <scope>NUCLEOTIDE SEQUENCE [LARGE SCALE GENOMIC DNA]</scope>
</reference>
<reference key="4">
    <citation type="submission" date="2005-09" db="EMBL/GenBank/DDBJ databases">
        <authorList>
            <person name="Mural R.J."/>
            <person name="Istrail S."/>
            <person name="Sutton G.G."/>
            <person name="Florea L."/>
            <person name="Halpern A.L."/>
            <person name="Mobarry C.M."/>
            <person name="Lippert R."/>
            <person name="Walenz B."/>
            <person name="Shatkay H."/>
            <person name="Dew I."/>
            <person name="Miller J.R."/>
            <person name="Flanigan M.J."/>
            <person name="Edwards N.J."/>
            <person name="Bolanos R."/>
            <person name="Fasulo D."/>
            <person name="Halldorsson B.V."/>
            <person name="Hannenhalli S."/>
            <person name="Turner R."/>
            <person name="Yooseph S."/>
            <person name="Lu F."/>
            <person name="Nusskern D.R."/>
            <person name="Shue B.C."/>
            <person name="Zheng X.H."/>
            <person name="Zhong F."/>
            <person name="Delcher A.L."/>
            <person name="Huson D.H."/>
            <person name="Kravitz S.A."/>
            <person name="Mouchard L."/>
            <person name="Reinert K."/>
            <person name="Remington K.A."/>
            <person name="Clark A.G."/>
            <person name="Waterman M.S."/>
            <person name="Eichler E.E."/>
            <person name="Adams M.D."/>
            <person name="Hunkapiller M.W."/>
            <person name="Myers E.W."/>
            <person name="Venter J.C."/>
        </authorList>
    </citation>
    <scope>NUCLEOTIDE SEQUENCE [LARGE SCALE GENOMIC DNA]</scope>
</reference>
<reference key="5">
    <citation type="journal article" date="2004" name="Genome Res.">
        <title>The status, quality, and expansion of the NIH full-length cDNA project: the Mammalian Gene Collection (MGC).</title>
        <authorList>
            <consortium name="The MGC Project Team"/>
        </authorList>
    </citation>
    <scope>NUCLEOTIDE SEQUENCE [LARGE SCALE MRNA] (ISOFORM 1)</scope>
    <source>
        <tissue>Uterus</tissue>
    </source>
</reference>
<reference key="6">
    <citation type="journal article" date="2008" name="Mol. Cell. Biol.">
        <title>PML activates transcription by protecting HIPK2 and p300 from SCFFbx3-mediated degradation.</title>
        <authorList>
            <person name="Shima Y."/>
            <person name="Shima T."/>
            <person name="Chiba T."/>
            <person name="Irimura T."/>
            <person name="Pandolfi P.P."/>
            <person name="Kitabayashi I."/>
        </authorList>
    </citation>
    <scope>FUNCTION</scope>
    <scope>SUBCELLULAR LOCATION</scope>
    <scope>PATHWAY</scope>
    <scope>INTERACTION WITH CUL1; PML; RBX1 AND SKP1</scope>
    <scope>UBIQUITINATION OF HIPK2</scope>
</reference>
<reference key="7">
    <citation type="journal article" date="1999" name="Curr. Biol.">
        <title>A family of mammalian F-box proteins.</title>
        <authorList>
            <person name="Winston J.T."/>
            <person name="Koepp D.M."/>
            <person name="Zhu C."/>
            <person name="Elledge S.J."/>
            <person name="Harper J.W."/>
        </authorList>
    </citation>
    <scope>NUCLEOTIDE SEQUENCE [MRNA] OF 6-471 (ISOFORM 2)</scope>
</reference>
<reference key="8">
    <citation type="journal article" date="2011" name="BMC Syst. Biol.">
        <title>Initial characterization of the human central proteome.</title>
        <authorList>
            <person name="Burkard T.R."/>
            <person name="Planyavsky M."/>
            <person name="Kaupe I."/>
            <person name="Breitwieser F.P."/>
            <person name="Buerckstuemmer T."/>
            <person name="Bennett K.L."/>
            <person name="Superti-Furga G."/>
            <person name="Colinge J."/>
        </authorList>
    </citation>
    <scope>IDENTIFICATION BY MASS SPECTROMETRY [LARGE SCALE ANALYSIS]</scope>
</reference>
<reference key="9">
    <citation type="journal article" date="2014" name="J. Virol.">
        <title>Virulence factor NSs of rift valley fever virus recruits the F-box protein FBXO3 to degrade subunit p62 of general transcription factor TFIIH.</title>
        <authorList>
            <person name="Kainulainen M."/>
            <person name="Habjan M."/>
            <person name="Hubel P."/>
            <person name="Busch L."/>
            <person name="Lau S."/>
            <person name="Colinge J."/>
            <person name="Superti-Furga G."/>
            <person name="Pichlmair A."/>
            <person name="Weber F."/>
        </authorList>
    </citation>
    <scope>INTERACTION WITH RIFT VALLEY FEVER VIRUS NSS (MICROBIAL INFECTION)</scope>
</reference>
<reference key="10">
    <citation type="journal article" date="2015" name="J. Biol. Chem.">
        <title>Lipopolysaccharide primes the NALP3 inflammasome by inhibiting its ubiquitination and degradation mediated by the SCFFBXL2 E3 ligase.</title>
        <authorList>
            <person name="Han S."/>
            <person name="Lear T.B."/>
            <person name="Jerome J.A."/>
            <person name="Rajbhandari S."/>
            <person name="Snavely C.A."/>
            <person name="Gulick D.L."/>
            <person name="Gibson K.F."/>
            <person name="Zou C."/>
            <person name="Chen B.B."/>
            <person name="Mallampalli R.K."/>
        </authorList>
    </citation>
    <scope>FUNCTION</scope>
    <scope>PATHWAY</scope>
</reference>
<reference key="11">
    <citation type="journal article" date="2024" name="Cell">
        <title>Rift Valley fever virus coordinates the assembly of a programmable E3 ligase to promote viral replication.</title>
        <authorList>
            <person name="Li H."/>
            <person name="Zhang Y."/>
            <person name="Rao G."/>
            <person name="Zhang C."/>
            <person name="Guan Z."/>
            <person name="Huang Z."/>
            <person name="Li S."/>
            <person name="Lozach P.Y."/>
            <person name="Cao S."/>
            <person name="Peng K."/>
        </authorList>
    </citation>
    <scope>FUNCTION (MICROBIAL INFECTION)</scope>
    <scope>INTERACTION WITH RIFT VALLEY FEVER VIRUS NSS (MICROBIAL INFECTION)</scope>
</reference>
<reference evidence="14" key="12">
    <citation type="journal article" date="2016" name="FEBS J.">
        <title>Crystal structure and interaction studies of the human FBxo3 ApaG domain.</title>
        <authorList>
            <person name="Krzysiak T.C."/>
            <person name="Chen B.B."/>
            <person name="Lear T."/>
            <person name="Mallampalli R.K."/>
            <person name="Gronenborn A.M."/>
        </authorList>
    </citation>
    <scope>X-RAY CRYSTALLOGRAPHY (2.00 ANGSTROMS) OF 278-407</scope>
    <scope>FUNCTION</scope>
</reference>
<organism>
    <name type="scientific">Homo sapiens</name>
    <name type="common">Human</name>
    <dbReference type="NCBI Taxonomy" id="9606"/>
    <lineage>
        <taxon>Eukaryota</taxon>
        <taxon>Metazoa</taxon>
        <taxon>Chordata</taxon>
        <taxon>Craniata</taxon>
        <taxon>Vertebrata</taxon>
        <taxon>Euteleostomi</taxon>
        <taxon>Mammalia</taxon>
        <taxon>Eutheria</taxon>
        <taxon>Euarchontoglires</taxon>
        <taxon>Primates</taxon>
        <taxon>Haplorrhini</taxon>
        <taxon>Catarrhini</taxon>
        <taxon>Hominidae</taxon>
        <taxon>Homo</taxon>
    </lineage>
</organism>
<evidence type="ECO:0000250" key="1">
    <source>
        <dbReference type="UniProtKB" id="Q9DC63"/>
    </source>
</evidence>
<evidence type="ECO:0000255" key="2">
    <source>
        <dbReference type="PROSITE-ProRule" id="PRU00080"/>
    </source>
</evidence>
<evidence type="ECO:0000255" key="3">
    <source>
        <dbReference type="PROSITE-ProRule" id="PRU00412"/>
    </source>
</evidence>
<evidence type="ECO:0000256" key="4">
    <source>
        <dbReference type="SAM" id="MobiDB-lite"/>
    </source>
</evidence>
<evidence type="ECO:0000269" key="5">
    <source>
    </source>
</evidence>
<evidence type="ECO:0000269" key="6">
    <source>
    </source>
</evidence>
<evidence type="ECO:0000269" key="7">
    <source>
    </source>
</evidence>
<evidence type="ECO:0000269" key="8">
    <source>
    </source>
</evidence>
<evidence type="ECO:0000269" key="9">
    <source>
    </source>
</evidence>
<evidence type="ECO:0000303" key="10">
    <source>
    </source>
</evidence>
<evidence type="ECO:0000303" key="11">
    <source>
    </source>
</evidence>
<evidence type="ECO:0000305" key="12"/>
<evidence type="ECO:0000312" key="13">
    <source>
        <dbReference type="HGNC" id="HGNC:13582"/>
    </source>
</evidence>
<evidence type="ECO:0007744" key="14">
    <source>
        <dbReference type="PDB" id="5HDW"/>
    </source>
</evidence>
<evidence type="ECO:0007829" key="15">
    <source>
        <dbReference type="PDB" id="5HDW"/>
    </source>
</evidence>
<gene>
    <name evidence="13" type="primary">FBXO3</name>
    <name type="synonym">FBX3</name>
</gene>
<protein>
    <recommendedName>
        <fullName>F-box only protein 3</fullName>
    </recommendedName>
</protein>
<proteinExistence type="evidence at protein level"/>
<name>FBX3_HUMAN</name>